<sequence length="665" mass="75924">MTERLGSVFIEGVSPELDAGRHAVKRVVGERCTVKADVFKEGHDVLVAVIRWRQVTPRAQQTDWEEVPMRFLGNDRWEGEFPLTRNGRYEYTIEAWPDLFRTWTSELKRKVDAGRDVRSELLEGAALLEGAVARARTAKQPDDARVLGEAAVRLRQPPSPDLLAVALAPELADVASTHPDRSLARRYDKVLEVFADREKARFSAWYEFFPRSAKRDGVTHATFRDAEGWLPYIQQLGFDTVYLPPIHPIGRTARKGKNNSLAAAADDVGSPWAIGASEGGHKAVHPKLGTLEDFRHFVETAQAHGIEVALDLAFQCSPDHPYVKEHPEWFQHRPDGTIKTAENPPKRYEDIVNFDWMGPARESLWAELESVVLHWVKQGVNTFRVDNPHTKPTQFWAWLIRRVQEAHPQVLFLSEAFTRPKVMKALGKVGFTQSYTYFTWRNFKGELQEYLEEITQPPVSDYFRGNLWPNTPDILPEFLQNAGPGAFRLRAALAGTLSSVWGMYCGYELCEGRPIPGKEEYTDSEKYQLVAWDLDRPGNIRDWIARLNAARRTHPALHQYGTLRFFSSNNDRVLFYGKRTPDGGSLVLMAVSLDPYAAQEALLHVPLEWLGARPDETYQVHELMSDQRSLWQGPDVQVRLTPEQPAALWAVHRFRRTENAFDYYE</sequence>
<organism>
    <name type="scientific">Myxococcus xanthus (strain DK1622)</name>
    <dbReference type="NCBI Taxonomy" id="246197"/>
    <lineage>
        <taxon>Bacteria</taxon>
        <taxon>Pseudomonadati</taxon>
        <taxon>Myxococcota</taxon>
        <taxon>Myxococcia</taxon>
        <taxon>Myxococcales</taxon>
        <taxon>Cystobacterineae</taxon>
        <taxon>Myxococcaceae</taxon>
        <taxon>Myxococcus</taxon>
    </lineage>
</organism>
<keyword id="KW-0119">Carbohydrate metabolism</keyword>
<keyword id="KW-0328">Glycosyltransferase</keyword>
<keyword id="KW-1185">Reference proteome</keyword>
<keyword id="KW-0808">Transferase</keyword>
<comment type="function">
    <text evidence="1">Maltosyltransferase that uses maltose 1-phosphate (M1P) as the sugar donor to elongate linear or branched alpha-(1-&gt;4)-glucans. Is involved in a branched alpha-glucan biosynthetic pathway from trehalose, together with TreS, Mak and GlgB.</text>
</comment>
<comment type="catalytic activity">
    <reaction evidence="1">
        <text>alpha-maltose 1-phosphate + [(1-&gt;4)-alpha-D-glucosyl](n) = [(1-&gt;4)-alpha-D-glucosyl](n+2) + phosphate</text>
        <dbReference type="Rhea" id="RHEA:42692"/>
        <dbReference type="Rhea" id="RHEA-COMP:9584"/>
        <dbReference type="Rhea" id="RHEA-COMP:10183"/>
        <dbReference type="ChEBI" id="CHEBI:15444"/>
        <dbReference type="ChEBI" id="CHEBI:43474"/>
        <dbReference type="ChEBI" id="CHEBI:63576"/>
        <dbReference type="EC" id="2.4.99.16"/>
    </reaction>
</comment>
<comment type="subunit">
    <text evidence="1">Homodimer.</text>
</comment>
<comment type="similarity">
    <text evidence="1">Belongs to the glycosyl hydrolase 13 family. GlgE subfamily.</text>
</comment>
<accession>Q1D651</accession>
<dbReference type="EC" id="2.4.99.16" evidence="1"/>
<dbReference type="EMBL" id="CP000113">
    <property type="protein sequence ID" value="ABF91735.1"/>
    <property type="molecule type" value="Genomic_DNA"/>
</dbReference>
<dbReference type="RefSeq" id="WP_011553703.1">
    <property type="nucleotide sequence ID" value="NC_008095.1"/>
</dbReference>
<dbReference type="SMR" id="Q1D651"/>
<dbReference type="STRING" id="246197.MXAN_3685"/>
<dbReference type="CAZy" id="GH13">
    <property type="family name" value="Glycoside Hydrolase Family 13"/>
</dbReference>
<dbReference type="EnsemblBacteria" id="ABF91735">
    <property type="protein sequence ID" value="ABF91735"/>
    <property type="gene ID" value="MXAN_3685"/>
</dbReference>
<dbReference type="GeneID" id="41361020"/>
<dbReference type="KEGG" id="mxa:MXAN_3685"/>
<dbReference type="eggNOG" id="COG0366">
    <property type="taxonomic scope" value="Bacteria"/>
</dbReference>
<dbReference type="HOGENOM" id="CLU_015798_0_0_7"/>
<dbReference type="OrthoDB" id="9805159at2"/>
<dbReference type="Proteomes" id="UP000002402">
    <property type="component" value="Chromosome"/>
</dbReference>
<dbReference type="GO" id="GO:0016758">
    <property type="term" value="F:hexosyltransferase activity"/>
    <property type="evidence" value="ECO:0007669"/>
    <property type="project" value="UniProtKB-UniRule"/>
</dbReference>
<dbReference type="GO" id="GO:0004553">
    <property type="term" value="F:hydrolase activity, hydrolyzing O-glycosyl compounds"/>
    <property type="evidence" value="ECO:0007669"/>
    <property type="project" value="InterPro"/>
</dbReference>
<dbReference type="GO" id="GO:0030979">
    <property type="term" value="P:alpha-glucan biosynthetic process"/>
    <property type="evidence" value="ECO:0007669"/>
    <property type="project" value="UniProtKB-UniRule"/>
</dbReference>
<dbReference type="CDD" id="cd11344">
    <property type="entry name" value="AmyAc_GlgE_like"/>
    <property type="match status" value="1"/>
</dbReference>
<dbReference type="Gene3D" id="3.20.20.80">
    <property type="entry name" value="Glycosidases"/>
    <property type="match status" value="1"/>
</dbReference>
<dbReference type="Gene3D" id="2.60.40.1180">
    <property type="entry name" value="Golgi alpha-mannosidase II"/>
    <property type="match status" value="1"/>
</dbReference>
<dbReference type="Gene3D" id="2.60.40.10">
    <property type="entry name" value="Immunoglobulins"/>
    <property type="match status" value="1"/>
</dbReference>
<dbReference type="Gene3D" id="1.20.58.80">
    <property type="entry name" value="Phosphotransferase system, lactose/cellobiose-type IIA subunit"/>
    <property type="match status" value="1"/>
</dbReference>
<dbReference type="HAMAP" id="MF_02124">
    <property type="entry name" value="GlgE"/>
    <property type="match status" value="1"/>
</dbReference>
<dbReference type="InterPro" id="IPR026585">
    <property type="entry name" value="GlgE"/>
</dbReference>
<dbReference type="InterPro" id="IPR049171">
    <property type="entry name" value="GLGE_C"/>
</dbReference>
<dbReference type="InterPro" id="IPR021828">
    <property type="entry name" value="GlgE_dom_N/S"/>
</dbReference>
<dbReference type="InterPro" id="IPR006047">
    <property type="entry name" value="Glyco_hydro_13_cat_dom"/>
</dbReference>
<dbReference type="InterPro" id="IPR013780">
    <property type="entry name" value="Glyco_hydro_b"/>
</dbReference>
<dbReference type="InterPro" id="IPR017853">
    <property type="entry name" value="Glycoside_hydrolase_SF"/>
</dbReference>
<dbReference type="InterPro" id="IPR013783">
    <property type="entry name" value="Ig-like_fold"/>
</dbReference>
<dbReference type="PANTHER" id="PTHR47786">
    <property type="entry name" value="ALPHA-1,4-GLUCAN:MALTOSE-1-PHOSPHATE MALTOSYLTRANSFERASE"/>
    <property type="match status" value="1"/>
</dbReference>
<dbReference type="PANTHER" id="PTHR47786:SF2">
    <property type="entry name" value="GLYCOSYL HYDROLASE FAMILY 13 CATALYTIC DOMAIN-CONTAINING PROTEIN"/>
    <property type="match status" value="1"/>
</dbReference>
<dbReference type="Pfam" id="PF00128">
    <property type="entry name" value="Alpha-amylase"/>
    <property type="match status" value="1"/>
</dbReference>
<dbReference type="Pfam" id="PF21702">
    <property type="entry name" value="GLGE_C"/>
    <property type="match status" value="1"/>
</dbReference>
<dbReference type="Pfam" id="PF11896">
    <property type="entry name" value="GlgE_dom_N_S"/>
    <property type="match status" value="1"/>
</dbReference>
<dbReference type="SMART" id="SM00642">
    <property type="entry name" value="Aamy"/>
    <property type="match status" value="1"/>
</dbReference>
<dbReference type="SUPFAM" id="SSF51445">
    <property type="entry name" value="(Trans)glycosidases"/>
    <property type="match status" value="1"/>
</dbReference>
<feature type="chain" id="PRO_0000413898" description="Alpha-1,4-glucan:maltose-1-phosphate maltosyltransferase">
    <location>
        <begin position="1"/>
        <end position="665"/>
    </location>
</feature>
<feature type="active site" description="Nucleophile" evidence="1">
    <location>
        <position position="386"/>
    </location>
</feature>
<feature type="active site" description="Proton donor" evidence="1">
    <location>
        <position position="415"/>
    </location>
</feature>
<feature type="binding site" evidence="1">
    <location>
        <position position="255"/>
    </location>
    <ligand>
        <name>alpha-maltose 1-phosphate</name>
        <dbReference type="ChEBI" id="CHEBI:63576"/>
    </ligand>
</feature>
<feature type="binding site" evidence="1">
    <location>
        <position position="315"/>
    </location>
    <ligand>
        <name>alpha-maltose 1-phosphate</name>
        <dbReference type="ChEBI" id="CHEBI:63576"/>
    </ligand>
</feature>
<feature type="binding site" evidence="1">
    <location>
        <position position="350"/>
    </location>
    <ligand>
        <name>alpha-maltose 1-phosphate</name>
        <dbReference type="ChEBI" id="CHEBI:63576"/>
    </ligand>
</feature>
<feature type="binding site" evidence="1">
    <location>
        <position position="387"/>
    </location>
    <ligand>
        <name>alpha-maltose 1-phosphate</name>
        <dbReference type="ChEBI" id="CHEBI:63576"/>
    </ligand>
</feature>
<feature type="binding site" evidence="1">
    <location>
        <begin position="526"/>
        <end position="527"/>
    </location>
    <ligand>
        <name>alpha-maltose 1-phosphate</name>
        <dbReference type="ChEBI" id="CHEBI:63576"/>
    </ligand>
</feature>
<feature type="site" description="Transition state stabilizer" evidence="1">
    <location>
        <position position="473"/>
    </location>
</feature>
<gene>
    <name evidence="1" type="primary">glgE</name>
    <name type="ordered locus">MXAN_3685</name>
</gene>
<evidence type="ECO:0000255" key="1">
    <source>
        <dbReference type="HAMAP-Rule" id="MF_02124"/>
    </source>
</evidence>
<name>GLGE_MYXXD</name>
<protein>
    <recommendedName>
        <fullName evidence="1">Alpha-1,4-glucan:maltose-1-phosphate maltosyltransferase</fullName>
        <shortName evidence="1">GMPMT</shortName>
        <ecNumber evidence="1">2.4.99.16</ecNumber>
    </recommendedName>
    <alternativeName>
        <fullName evidence="1">(1-&gt;4)-alpha-D-glucan:maltose-1-phosphate alpha-D-maltosyltransferase</fullName>
    </alternativeName>
</protein>
<proteinExistence type="inferred from homology"/>
<reference key="1">
    <citation type="journal article" date="2006" name="Proc. Natl. Acad. Sci. U.S.A.">
        <title>Evolution of sensory complexity recorded in a myxobacterial genome.</title>
        <authorList>
            <person name="Goldman B.S."/>
            <person name="Nierman W.C."/>
            <person name="Kaiser D."/>
            <person name="Slater S.C."/>
            <person name="Durkin A.S."/>
            <person name="Eisen J.A."/>
            <person name="Ronning C.M."/>
            <person name="Barbazuk W.B."/>
            <person name="Blanchard M."/>
            <person name="Field C."/>
            <person name="Halling C."/>
            <person name="Hinkle G."/>
            <person name="Iartchuk O."/>
            <person name="Kim H.S."/>
            <person name="Mackenzie C."/>
            <person name="Madupu R."/>
            <person name="Miller N."/>
            <person name="Shvartsbeyn A."/>
            <person name="Sullivan S.A."/>
            <person name="Vaudin M."/>
            <person name="Wiegand R."/>
            <person name="Kaplan H.B."/>
        </authorList>
    </citation>
    <scope>NUCLEOTIDE SEQUENCE [LARGE SCALE GENOMIC DNA]</scope>
    <source>
        <strain>DK1622</strain>
    </source>
</reference>